<sequence>MAQFYTPGRRTATRKILIVTATDLDAFGQGVAREQGKTLFISGLLPGEQAEVILSEEKRHFARGRVTRLISHSPQRVAPRCPHAGVCGGCQQQHAAIALQQQSKSQALQRLMARETGVDIAPQVIAGEPYGYRRRARFGLQFNVKTQRVVLGFRQAASNDLVALKACPVLAPALEALLLPLGECLSALRARRRLGHLELVLADNGPLMVLRHLDPLSLSDREALSAFARQRGLTLYLSDGGAPQRLLGEAPYYQIDGSRLDFNPQDFIQVNAAVNAQMVGQALAWLDVRADERVLDLFCGMGNFTLPLARLALRVVGVEGVPGLVATAQNNARNNGLSNVEFFHQNLEEDVTRQAWASQGFDKILLDPARAGAPGVMQHIVRLAPRRVVYVSCNPTTLARDSQTLLQGGYRLTRLCMLDMFPHTGHLESMALFESAAQ</sequence>
<organism>
    <name type="scientific">Edwardsiella ictaluri (strain 93-146)</name>
    <dbReference type="NCBI Taxonomy" id="634503"/>
    <lineage>
        <taxon>Bacteria</taxon>
        <taxon>Pseudomonadati</taxon>
        <taxon>Pseudomonadota</taxon>
        <taxon>Gammaproteobacteria</taxon>
        <taxon>Enterobacterales</taxon>
        <taxon>Hafniaceae</taxon>
        <taxon>Edwardsiella</taxon>
    </lineage>
</organism>
<dbReference type="EC" id="2.1.1.190" evidence="1"/>
<dbReference type="EMBL" id="CP001600">
    <property type="protein sequence ID" value="ACR70179.1"/>
    <property type="molecule type" value="Genomic_DNA"/>
</dbReference>
<dbReference type="RefSeq" id="WP_015872269.1">
    <property type="nucleotide sequence ID" value="NZ_CP169062.1"/>
</dbReference>
<dbReference type="SMR" id="C5B8X6"/>
<dbReference type="STRING" id="67780.B6E78_07000"/>
<dbReference type="GeneID" id="69539901"/>
<dbReference type="KEGG" id="eic:NT01EI_3026"/>
<dbReference type="PATRIC" id="fig|634503.3.peg.2706"/>
<dbReference type="HOGENOM" id="CLU_014689_8_2_6"/>
<dbReference type="OrthoDB" id="9804590at2"/>
<dbReference type="Proteomes" id="UP000001485">
    <property type="component" value="Chromosome"/>
</dbReference>
<dbReference type="GO" id="GO:0051539">
    <property type="term" value="F:4 iron, 4 sulfur cluster binding"/>
    <property type="evidence" value="ECO:0007669"/>
    <property type="project" value="UniProtKB-KW"/>
</dbReference>
<dbReference type="GO" id="GO:0005506">
    <property type="term" value="F:iron ion binding"/>
    <property type="evidence" value="ECO:0007669"/>
    <property type="project" value="UniProtKB-UniRule"/>
</dbReference>
<dbReference type="GO" id="GO:0003723">
    <property type="term" value="F:RNA binding"/>
    <property type="evidence" value="ECO:0007669"/>
    <property type="project" value="InterPro"/>
</dbReference>
<dbReference type="GO" id="GO:0070041">
    <property type="term" value="F:rRNA (uridine-C5-)-methyltransferase activity"/>
    <property type="evidence" value="ECO:0007669"/>
    <property type="project" value="UniProtKB-UniRule"/>
</dbReference>
<dbReference type="GO" id="GO:0070475">
    <property type="term" value="P:rRNA base methylation"/>
    <property type="evidence" value="ECO:0007669"/>
    <property type="project" value="TreeGrafter"/>
</dbReference>
<dbReference type="CDD" id="cd02440">
    <property type="entry name" value="AdoMet_MTases"/>
    <property type="match status" value="1"/>
</dbReference>
<dbReference type="FunFam" id="3.40.50.150:FF:000009">
    <property type="entry name" value="23S rRNA (Uracil(1939)-C(5))-methyltransferase RlmD"/>
    <property type="match status" value="1"/>
</dbReference>
<dbReference type="FunFam" id="2.40.50.140:FF:000097">
    <property type="entry name" value="23S rRNA (uracil(1939)-C(5))-methyltransferase RlmD"/>
    <property type="match status" value="1"/>
</dbReference>
<dbReference type="Gene3D" id="2.40.50.1070">
    <property type="match status" value="1"/>
</dbReference>
<dbReference type="Gene3D" id="2.40.50.140">
    <property type="entry name" value="Nucleic acid-binding proteins"/>
    <property type="match status" value="1"/>
</dbReference>
<dbReference type="Gene3D" id="3.40.50.150">
    <property type="entry name" value="Vaccinia Virus protein VP39"/>
    <property type="match status" value="1"/>
</dbReference>
<dbReference type="HAMAP" id="MF_01010">
    <property type="entry name" value="23SrRNA_methyltr_RlmD"/>
    <property type="match status" value="1"/>
</dbReference>
<dbReference type="InterPro" id="IPR001566">
    <property type="entry name" value="23S_rRNA_MeTrfase_RlmD"/>
</dbReference>
<dbReference type="InterPro" id="IPR030390">
    <property type="entry name" value="MeTrfase_TrmA_AS"/>
</dbReference>
<dbReference type="InterPro" id="IPR030391">
    <property type="entry name" value="MeTrfase_TrmA_CS"/>
</dbReference>
<dbReference type="InterPro" id="IPR012340">
    <property type="entry name" value="NA-bd_OB-fold"/>
</dbReference>
<dbReference type="InterPro" id="IPR029063">
    <property type="entry name" value="SAM-dependent_MTases_sf"/>
</dbReference>
<dbReference type="InterPro" id="IPR002792">
    <property type="entry name" value="TRAM_dom"/>
</dbReference>
<dbReference type="InterPro" id="IPR010280">
    <property type="entry name" value="U5_MeTrfase_fam"/>
</dbReference>
<dbReference type="NCBIfam" id="NF009639">
    <property type="entry name" value="PRK13168.1"/>
    <property type="match status" value="1"/>
</dbReference>
<dbReference type="NCBIfam" id="TIGR00479">
    <property type="entry name" value="rumA"/>
    <property type="match status" value="1"/>
</dbReference>
<dbReference type="PANTHER" id="PTHR11061:SF49">
    <property type="entry name" value="23S RRNA (URACIL(1939)-C(5))-METHYLTRANSFERASE RLMD"/>
    <property type="match status" value="1"/>
</dbReference>
<dbReference type="PANTHER" id="PTHR11061">
    <property type="entry name" value="RNA M5U METHYLTRANSFERASE"/>
    <property type="match status" value="1"/>
</dbReference>
<dbReference type="Pfam" id="PF01938">
    <property type="entry name" value="TRAM"/>
    <property type="match status" value="1"/>
</dbReference>
<dbReference type="Pfam" id="PF05958">
    <property type="entry name" value="tRNA_U5-meth_tr"/>
    <property type="match status" value="1"/>
</dbReference>
<dbReference type="SUPFAM" id="SSF50249">
    <property type="entry name" value="Nucleic acid-binding proteins"/>
    <property type="match status" value="1"/>
</dbReference>
<dbReference type="SUPFAM" id="SSF53335">
    <property type="entry name" value="S-adenosyl-L-methionine-dependent methyltransferases"/>
    <property type="match status" value="1"/>
</dbReference>
<dbReference type="PROSITE" id="PS51687">
    <property type="entry name" value="SAM_MT_RNA_M5U"/>
    <property type="match status" value="1"/>
</dbReference>
<dbReference type="PROSITE" id="PS50926">
    <property type="entry name" value="TRAM"/>
    <property type="match status" value="1"/>
</dbReference>
<dbReference type="PROSITE" id="PS01230">
    <property type="entry name" value="TRMA_1"/>
    <property type="match status" value="1"/>
</dbReference>
<dbReference type="PROSITE" id="PS01231">
    <property type="entry name" value="TRMA_2"/>
    <property type="match status" value="1"/>
</dbReference>
<reference key="1">
    <citation type="submission" date="2009-03" db="EMBL/GenBank/DDBJ databases">
        <title>Complete genome sequence of Edwardsiella ictaluri 93-146.</title>
        <authorList>
            <person name="Williams M.L."/>
            <person name="Gillaspy A.F."/>
            <person name="Dyer D.W."/>
            <person name="Thune R.L."/>
            <person name="Waldbieser G.C."/>
            <person name="Schuster S.C."/>
            <person name="Gipson J."/>
            <person name="Zaitshik J."/>
            <person name="Landry C."/>
            <person name="Lawrence M.L."/>
        </authorList>
    </citation>
    <scope>NUCLEOTIDE SEQUENCE [LARGE SCALE GENOMIC DNA]</scope>
    <source>
        <strain>93-146</strain>
    </source>
</reference>
<gene>
    <name evidence="1" type="primary">rlmD</name>
    <name type="synonym">rumA</name>
    <name type="ordered locus">NT01EI_3026</name>
</gene>
<accession>C5B8X6</accession>
<feature type="chain" id="PRO_1000213193" description="23S rRNA (uracil(1939)-C(5))-methyltransferase RlmD">
    <location>
        <begin position="1"/>
        <end position="438"/>
    </location>
</feature>
<feature type="domain" description="TRAM" evidence="1">
    <location>
        <begin position="4"/>
        <end position="68"/>
    </location>
</feature>
<feature type="active site" description="Nucleophile" evidence="1">
    <location>
        <position position="393"/>
    </location>
</feature>
<feature type="binding site" evidence="1">
    <location>
        <position position="81"/>
    </location>
    <ligand>
        <name>[4Fe-4S] cluster</name>
        <dbReference type="ChEBI" id="CHEBI:49883"/>
    </ligand>
</feature>
<feature type="binding site" evidence="1">
    <location>
        <position position="87"/>
    </location>
    <ligand>
        <name>[4Fe-4S] cluster</name>
        <dbReference type="ChEBI" id="CHEBI:49883"/>
    </ligand>
</feature>
<feature type="binding site" evidence="1">
    <location>
        <position position="90"/>
    </location>
    <ligand>
        <name>[4Fe-4S] cluster</name>
        <dbReference type="ChEBI" id="CHEBI:49883"/>
    </ligand>
</feature>
<feature type="binding site" evidence="1">
    <location>
        <position position="167"/>
    </location>
    <ligand>
        <name>[4Fe-4S] cluster</name>
        <dbReference type="ChEBI" id="CHEBI:49883"/>
    </ligand>
</feature>
<feature type="binding site" evidence="1">
    <location>
        <position position="269"/>
    </location>
    <ligand>
        <name>S-adenosyl-L-methionine</name>
        <dbReference type="ChEBI" id="CHEBI:59789"/>
    </ligand>
</feature>
<feature type="binding site" evidence="1">
    <location>
        <position position="298"/>
    </location>
    <ligand>
        <name>S-adenosyl-L-methionine</name>
        <dbReference type="ChEBI" id="CHEBI:59789"/>
    </ligand>
</feature>
<feature type="binding site" evidence="1">
    <location>
        <position position="303"/>
    </location>
    <ligand>
        <name>S-adenosyl-L-methionine</name>
        <dbReference type="ChEBI" id="CHEBI:59789"/>
    </ligand>
</feature>
<feature type="binding site" evidence="1">
    <location>
        <position position="319"/>
    </location>
    <ligand>
        <name>S-adenosyl-L-methionine</name>
        <dbReference type="ChEBI" id="CHEBI:59789"/>
    </ligand>
</feature>
<feature type="binding site" evidence="1">
    <location>
        <position position="346"/>
    </location>
    <ligand>
        <name>S-adenosyl-L-methionine</name>
        <dbReference type="ChEBI" id="CHEBI:59789"/>
    </ligand>
</feature>
<feature type="binding site" evidence="1">
    <location>
        <position position="367"/>
    </location>
    <ligand>
        <name>S-adenosyl-L-methionine</name>
        <dbReference type="ChEBI" id="CHEBI:59789"/>
    </ligand>
</feature>
<proteinExistence type="inferred from homology"/>
<name>RLMD_EDWI9</name>
<protein>
    <recommendedName>
        <fullName evidence="1">23S rRNA (uracil(1939)-C(5))-methyltransferase RlmD</fullName>
        <ecNumber evidence="1">2.1.1.190</ecNumber>
    </recommendedName>
    <alternativeName>
        <fullName evidence="1">23S rRNA(m5U1939)-methyltransferase</fullName>
    </alternativeName>
</protein>
<evidence type="ECO:0000255" key="1">
    <source>
        <dbReference type="HAMAP-Rule" id="MF_01010"/>
    </source>
</evidence>
<keyword id="KW-0004">4Fe-4S</keyword>
<keyword id="KW-0408">Iron</keyword>
<keyword id="KW-0411">Iron-sulfur</keyword>
<keyword id="KW-0479">Metal-binding</keyword>
<keyword id="KW-0489">Methyltransferase</keyword>
<keyword id="KW-0698">rRNA processing</keyword>
<keyword id="KW-0949">S-adenosyl-L-methionine</keyword>
<keyword id="KW-0808">Transferase</keyword>
<comment type="function">
    <text evidence="1">Catalyzes the formation of 5-methyl-uridine at position 1939 (m5U1939) in 23S rRNA.</text>
</comment>
<comment type="catalytic activity">
    <reaction evidence="1">
        <text>uridine(1939) in 23S rRNA + S-adenosyl-L-methionine = 5-methyluridine(1939) in 23S rRNA + S-adenosyl-L-homocysteine + H(+)</text>
        <dbReference type="Rhea" id="RHEA:42908"/>
        <dbReference type="Rhea" id="RHEA-COMP:10278"/>
        <dbReference type="Rhea" id="RHEA-COMP:10279"/>
        <dbReference type="ChEBI" id="CHEBI:15378"/>
        <dbReference type="ChEBI" id="CHEBI:57856"/>
        <dbReference type="ChEBI" id="CHEBI:59789"/>
        <dbReference type="ChEBI" id="CHEBI:65315"/>
        <dbReference type="ChEBI" id="CHEBI:74447"/>
        <dbReference type="EC" id="2.1.1.190"/>
    </reaction>
</comment>
<comment type="similarity">
    <text evidence="1">Belongs to the class I-like SAM-binding methyltransferase superfamily. RNA M5U methyltransferase family. RlmD subfamily.</text>
</comment>